<keyword id="KW-0413">Isomerase</keyword>
<keyword id="KW-0460">Magnesium</keyword>
<keyword id="KW-0479">Metal-binding</keyword>
<keyword id="KW-0597">Phosphoprotein</keyword>
<gene>
    <name evidence="1" type="primary">glmM</name>
    <name type="ordered locus">CAB757</name>
</gene>
<dbReference type="EC" id="5.4.2.10" evidence="1"/>
<dbReference type="EMBL" id="CR848038">
    <property type="protein sequence ID" value="CAH64204.1"/>
    <property type="molecule type" value="Genomic_DNA"/>
</dbReference>
<dbReference type="RefSeq" id="WP_006344368.1">
    <property type="nucleotide sequence ID" value="NC_004552.2"/>
</dbReference>
<dbReference type="SMR" id="Q5L588"/>
<dbReference type="KEGG" id="cab:CAB757"/>
<dbReference type="eggNOG" id="COG1109">
    <property type="taxonomic scope" value="Bacteria"/>
</dbReference>
<dbReference type="HOGENOM" id="CLU_016950_7_0_0"/>
<dbReference type="OrthoDB" id="9806956at2"/>
<dbReference type="Proteomes" id="UP000001012">
    <property type="component" value="Chromosome"/>
</dbReference>
<dbReference type="GO" id="GO:0005829">
    <property type="term" value="C:cytosol"/>
    <property type="evidence" value="ECO:0007669"/>
    <property type="project" value="TreeGrafter"/>
</dbReference>
<dbReference type="GO" id="GO:0000287">
    <property type="term" value="F:magnesium ion binding"/>
    <property type="evidence" value="ECO:0007669"/>
    <property type="project" value="UniProtKB-UniRule"/>
</dbReference>
<dbReference type="GO" id="GO:0008966">
    <property type="term" value="F:phosphoglucosamine mutase activity"/>
    <property type="evidence" value="ECO:0007669"/>
    <property type="project" value="UniProtKB-UniRule"/>
</dbReference>
<dbReference type="GO" id="GO:0004615">
    <property type="term" value="F:phosphomannomutase activity"/>
    <property type="evidence" value="ECO:0007669"/>
    <property type="project" value="TreeGrafter"/>
</dbReference>
<dbReference type="GO" id="GO:0005975">
    <property type="term" value="P:carbohydrate metabolic process"/>
    <property type="evidence" value="ECO:0007669"/>
    <property type="project" value="InterPro"/>
</dbReference>
<dbReference type="GO" id="GO:0009252">
    <property type="term" value="P:peptidoglycan biosynthetic process"/>
    <property type="evidence" value="ECO:0007669"/>
    <property type="project" value="TreeGrafter"/>
</dbReference>
<dbReference type="GO" id="GO:0006048">
    <property type="term" value="P:UDP-N-acetylglucosamine biosynthetic process"/>
    <property type="evidence" value="ECO:0007669"/>
    <property type="project" value="TreeGrafter"/>
</dbReference>
<dbReference type="CDD" id="cd05802">
    <property type="entry name" value="GlmM"/>
    <property type="match status" value="1"/>
</dbReference>
<dbReference type="FunFam" id="3.30.310.50:FF:000001">
    <property type="entry name" value="Phosphoglucosamine mutase"/>
    <property type="match status" value="1"/>
</dbReference>
<dbReference type="FunFam" id="3.40.120.10:FF:000001">
    <property type="entry name" value="Phosphoglucosamine mutase"/>
    <property type="match status" value="1"/>
</dbReference>
<dbReference type="FunFam" id="3.40.120.10:FF:000003">
    <property type="entry name" value="Phosphoglucosamine mutase"/>
    <property type="match status" value="1"/>
</dbReference>
<dbReference type="Gene3D" id="3.40.120.10">
    <property type="entry name" value="Alpha-D-Glucose-1,6-Bisphosphate, subunit A, domain 3"/>
    <property type="match status" value="3"/>
</dbReference>
<dbReference type="Gene3D" id="3.30.310.50">
    <property type="entry name" value="Alpha-D-phosphohexomutase, C-terminal domain"/>
    <property type="match status" value="1"/>
</dbReference>
<dbReference type="HAMAP" id="MF_01554_B">
    <property type="entry name" value="GlmM_B"/>
    <property type="match status" value="1"/>
</dbReference>
<dbReference type="InterPro" id="IPR005844">
    <property type="entry name" value="A-D-PHexomutase_a/b/a-I"/>
</dbReference>
<dbReference type="InterPro" id="IPR016055">
    <property type="entry name" value="A-D-PHexomutase_a/b/a-I/II/III"/>
</dbReference>
<dbReference type="InterPro" id="IPR005845">
    <property type="entry name" value="A-D-PHexomutase_a/b/a-II"/>
</dbReference>
<dbReference type="InterPro" id="IPR005846">
    <property type="entry name" value="A-D-PHexomutase_a/b/a-III"/>
</dbReference>
<dbReference type="InterPro" id="IPR005843">
    <property type="entry name" value="A-D-PHexomutase_C"/>
</dbReference>
<dbReference type="InterPro" id="IPR036900">
    <property type="entry name" value="A-D-PHexomutase_C_sf"/>
</dbReference>
<dbReference type="InterPro" id="IPR016066">
    <property type="entry name" value="A-D-PHexomutase_CS"/>
</dbReference>
<dbReference type="InterPro" id="IPR005841">
    <property type="entry name" value="Alpha-D-phosphohexomutase_SF"/>
</dbReference>
<dbReference type="InterPro" id="IPR006352">
    <property type="entry name" value="GlmM_bact"/>
</dbReference>
<dbReference type="InterPro" id="IPR050060">
    <property type="entry name" value="Phosphoglucosamine_mutase"/>
</dbReference>
<dbReference type="NCBIfam" id="TIGR01455">
    <property type="entry name" value="glmM"/>
    <property type="match status" value="1"/>
</dbReference>
<dbReference type="NCBIfam" id="NF008139">
    <property type="entry name" value="PRK10887.1"/>
    <property type="match status" value="1"/>
</dbReference>
<dbReference type="PANTHER" id="PTHR42946:SF1">
    <property type="entry name" value="PHOSPHOGLUCOMUTASE (ALPHA-D-GLUCOSE-1,6-BISPHOSPHATE-DEPENDENT)"/>
    <property type="match status" value="1"/>
</dbReference>
<dbReference type="PANTHER" id="PTHR42946">
    <property type="entry name" value="PHOSPHOHEXOSE MUTASE"/>
    <property type="match status" value="1"/>
</dbReference>
<dbReference type="Pfam" id="PF02878">
    <property type="entry name" value="PGM_PMM_I"/>
    <property type="match status" value="1"/>
</dbReference>
<dbReference type="Pfam" id="PF02879">
    <property type="entry name" value="PGM_PMM_II"/>
    <property type="match status" value="1"/>
</dbReference>
<dbReference type="Pfam" id="PF02880">
    <property type="entry name" value="PGM_PMM_III"/>
    <property type="match status" value="1"/>
</dbReference>
<dbReference type="Pfam" id="PF00408">
    <property type="entry name" value="PGM_PMM_IV"/>
    <property type="match status" value="1"/>
</dbReference>
<dbReference type="PRINTS" id="PR00509">
    <property type="entry name" value="PGMPMM"/>
</dbReference>
<dbReference type="SUPFAM" id="SSF55957">
    <property type="entry name" value="Phosphoglucomutase, C-terminal domain"/>
    <property type="match status" value="1"/>
</dbReference>
<dbReference type="SUPFAM" id="SSF53738">
    <property type="entry name" value="Phosphoglucomutase, first 3 domains"/>
    <property type="match status" value="3"/>
</dbReference>
<dbReference type="PROSITE" id="PS00710">
    <property type="entry name" value="PGM_PMM"/>
    <property type="match status" value="1"/>
</dbReference>
<evidence type="ECO:0000255" key="1">
    <source>
        <dbReference type="HAMAP-Rule" id="MF_01554"/>
    </source>
</evidence>
<protein>
    <recommendedName>
        <fullName evidence="1">Phosphoglucosamine mutase</fullName>
        <ecNumber evidence="1">5.4.2.10</ecNumber>
    </recommendedName>
</protein>
<sequence length="458" mass="49591">MTKEVKQLFGTDGVRGKANYEPMTVELSVLLGKAVAGVLQESKSGKHRVVVGKDTRLSGYMFENALVAGLTSMGIETLVLGPIPTPGVAFITRAYRADAGIMISASHNPYWDNGIKIFSSEGFKISDVIERRIEQMVALKEFGNFPDDCAVGKNKRVVDAMGRYIEFAKATFPRGRTLKGLKIVLDCAHGAAYKVAPSVFEELDAEVICYGCEPTGSNINDNCGALFPSVIQKAVIEHKADVGIALDGDGDRVIMVDEKGHIVDGDMILSICANDLKKKDLLRGNRVIATVMTNFGVLKYLESVGIEALISPVGDRHVLQNMLEYEVNLGGEQSGHMIFLDYNTTGDGIVSALQVLRIMIESESTLSDLTSLIVKSPQALINVAVKEKIPLDTLPLVQEALRDVRSSLGDSGRVLLRYSGTENICRVMVEGLKKHQVDSLAKTIADIVDSELGVGMVE</sequence>
<proteinExistence type="inferred from homology"/>
<feature type="chain" id="PRO_0000147870" description="Phosphoglucosamine mutase">
    <location>
        <begin position="1"/>
        <end position="458"/>
    </location>
</feature>
<feature type="active site" description="Phosphoserine intermediate" evidence="1">
    <location>
        <position position="106"/>
    </location>
</feature>
<feature type="binding site" description="via phosphate group" evidence="1">
    <location>
        <position position="106"/>
    </location>
    <ligand>
        <name>Mg(2+)</name>
        <dbReference type="ChEBI" id="CHEBI:18420"/>
    </ligand>
</feature>
<feature type="binding site" evidence="1">
    <location>
        <position position="247"/>
    </location>
    <ligand>
        <name>Mg(2+)</name>
        <dbReference type="ChEBI" id="CHEBI:18420"/>
    </ligand>
</feature>
<feature type="binding site" evidence="1">
    <location>
        <position position="249"/>
    </location>
    <ligand>
        <name>Mg(2+)</name>
        <dbReference type="ChEBI" id="CHEBI:18420"/>
    </ligand>
</feature>
<feature type="binding site" evidence="1">
    <location>
        <position position="251"/>
    </location>
    <ligand>
        <name>Mg(2+)</name>
        <dbReference type="ChEBI" id="CHEBI:18420"/>
    </ligand>
</feature>
<feature type="modified residue" description="Phosphoserine" evidence="1">
    <location>
        <position position="106"/>
    </location>
</feature>
<comment type="function">
    <text evidence="1">Catalyzes the conversion of glucosamine-6-phosphate to glucosamine-1-phosphate.</text>
</comment>
<comment type="catalytic activity">
    <reaction evidence="1">
        <text>alpha-D-glucosamine 1-phosphate = D-glucosamine 6-phosphate</text>
        <dbReference type="Rhea" id="RHEA:23424"/>
        <dbReference type="ChEBI" id="CHEBI:58516"/>
        <dbReference type="ChEBI" id="CHEBI:58725"/>
        <dbReference type="EC" id="5.4.2.10"/>
    </reaction>
</comment>
<comment type="cofactor">
    <cofactor evidence="1">
        <name>Mg(2+)</name>
        <dbReference type="ChEBI" id="CHEBI:18420"/>
    </cofactor>
    <text evidence="1">Binds 1 Mg(2+) ion per subunit.</text>
</comment>
<comment type="PTM">
    <text evidence="1">Activated by phosphorylation.</text>
</comment>
<comment type="similarity">
    <text evidence="1">Belongs to the phosphohexose mutase family.</text>
</comment>
<accession>Q5L588</accession>
<organism>
    <name type="scientific">Chlamydia abortus (strain DSM 27085 / S26/3)</name>
    <name type="common">Chlamydophila abortus</name>
    <dbReference type="NCBI Taxonomy" id="218497"/>
    <lineage>
        <taxon>Bacteria</taxon>
        <taxon>Pseudomonadati</taxon>
        <taxon>Chlamydiota</taxon>
        <taxon>Chlamydiia</taxon>
        <taxon>Chlamydiales</taxon>
        <taxon>Chlamydiaceae</taxon>
        <taxon>Chlamydia/Chlamydophila group</taxon>
        <taxon>Chlamydia</taxon>
    </lineage>
</organism>
<name>GLMM_CHLAB</name>
<reference key="1">
    <citation type="journal article" date="2005" name="Genome Res.">
        <title>The Chlamydophila abortus genome sequence reveals an array of variable proteins that contribute to interspecies variation.</title>
        <authorList>
            <person name="Thomson N.R."/>
            <person name="Yeats C."/>
            <person name="Bell K."/>
            <person name="Holden M.T.G."/>
            <person name="Bentley S.D."/>
            <person name="Livingstone M."/>
            <person name="Cerdeno-Tarraga A.-M."/>
            <person name="Harris B."/>
            <person name="Doggett J."/>
            <person name="Ormond D."/>
            <person name="Mungall K."/>
            <person name="Clarke K."/>
            <person name="Feltwell T."/>
            <person name="Hance Z."/>
            <person name="Sanders M."/>
            <person name="Quail M.A."/>
            <person name="Price C."/>
            <person name="Barrell B.G."/>
            <person name="Parkhill J."/>
            <person name="Longbottom D."/>
        </authorList>
    </citation>
    <scope>NUCLEOTIDE SEQUENCE [LARGE SCALE GENOMIC DNA]</scope>
    <source>
        <strain>DSM 27085 / S26/3</strain>
    </source>
</reference>